<keyword id="KW-0028">Amino-acid biosynthesis</keyword>
<keyword id="KW-0413">Isomerase</keyword>
<keyword id="KW-0460">Magnesium</keyword>
<keyword id="KW-0479">Metal-binding</keyword>
<keyword id="KW-0486">Methionine biosynthesis</keyword>
<keyword id="KW-1185">Reference proteome</keyword>
<feature type="chain" id="PRO_0000062691" description="2,3-diketo-5-methylthiopentyl-1-phosphate enolase">
    <location>
        <begin position="1"/>
        <end position="405"/>
    </location>
</feature>
<feature type="active site" description="Proton acceptor" evidence="1">
    <location>
        <position position="91"/>
    </location>
</feature>
<feature type="binding site" evidence="1">
    <location>
        <position position="140"/>
    </location>
    <ligand>
        <name>substrate</name>
    </ligand>
</feature>
<feature type="binding site" evidence="1">
    <location>
        <begin position="166"/>
        <end position="169"/>
    </location>
    <ligand>
        <name>substrate</name>
    </ligand>
</feature>
<feature type="binding site" description="via carbamate group" evidence="1">
    <location>
        <position position="166"/>
    </location>
    <ligand>
        <name>Mg(2+)</name>
        <dbReference type="ChEBI" id="CHEBI:18420"/>
    </ligand>
</feature>
<feature type="binding site" evidence="1">
    <location>
        <position position="168"/>
    </location>
    <ligand>
        <name>Mg(2+)</name>
        <dbReference type="ChEBI" id="CHEBI:18420"/>
    </ligand>
</feature>
<feature type="binding site" evidence="1">
    <location>
        <position position="169"/>
    </location>
    <ligand>
        <name>Mg(2+)</name>
        <dbReference type="ChEBI" id="CHEBI:18420"/>
    </ligand>
</feature>
<feature type="binding site" evidence="1">
    <location>
        <position position="257"/>
    </location>
    <ligand>
        <name>substrate</name>
    </ligand>
</feature>
<feature type="binding site" evidence="1">
    <location>
        <position position="329"/>
    </location>
    <ligand>
        <name>substrate</name>
    </ligand>
</feature>
<feature type="binding site" evidence="1">
    <location>
        <begin position="351"/>
        <end position="352"/>
    </location>
    <ligand>
        <name>substrate</name>
    </ligand>
</feature>
<feature type="modified residue" description="N6-carboxylysine" evidence="1">
    <location>
        <position position="166"/>
    </location>
</feature>
<evidence type="ECO:0000255" key="1">
    <source>
        <dbReference type="HAMAP-Rule" id="MF_01679"/>
    </source>
</evidence>
<evidence type="ECO:0000305" key="2"/>
<accession>Q65KJ8</accession>
<accession>Q62VZ6</accession>
<protein>
    <recommendedName>
        <fullName evidence="1">2,3-diketo-5-methylthiopentyl-1-phosphate enolase</fullName>
        <shortName evidence="1">DK-MTP-1-P enolase</shortName>
        <ecNumber evidence="1">5.3.2.5</ecNumber>
    </recommendedName>
    <alternativeName>
        <fullName evidence="1">RuBisCO-like protein</fullName>
        <shortName evidence="1">RLP</shortName>
    </alternativeName>
</protein>
<sequence>MSELLATYILADPGCDAEKRAEQIAIGLTVGSWTDLPLLKQEQLKKHKGRVVNVEETESELGEKQATVTIAYPEANFTNDIPAVLTTVFGKLSLDGKIKLADLEFSRSFKQSLPGPKFGVYGIRKKIGEFERPLLMSIFKGVIGRDMEDLKEQLRQQALGGVDLIKDDEILFETGSAPFEKRITEGKKVLEEAFEETGRKTLYAVNLTGRTMELKAKARKAAELGADVLLLNVFAYGLDVLQSFAEDDDIPLPIMAHPAVSGALTSSPHYGFSHSLLLGKLNRYAGADFSLFPSPYGSVALPKRDALAIYDECTKEDVFKPTFAVPSAGIHPGMVPLLMKDFGIDHIINAGGGIHGHPNGAAGGGRAFRAVIDAVLEAEPVEEKAKRSPDLKLALEKWGRVEVSV</sequence>
<gene>
    <name evidence="1" type="primary">mtnW</name>
    <name type="ordered locus">BLi01515</name>
    <name type="ordered locus">BL03540</name>
</gene>
<comment type="function">
    <text evidence="1">Catalyzes the enolization of 2,3-diketo-5-methylthiopentyl-1-phosphate (DK-MTP-1-P) into 2-hydroxy-3-keto-5-methylthiopentenyl-1-phosphate (HK-MTPenyl-1-P).</text>
</comment>
<comment type="catalytic activity">
    <reaction evidence="1">
        <text>5-methylsulfanyl-2,3-dioxopentyl phosphate = 2-hydroxy-5-methylsulfanyl-3-oxopent-1-enyl phosphate</text>
        <dbReference type="Rhea" id="RHEA:18769"/>
        <dbReference type="ChEBI" id="CHEBI:58828"/>
        <dbReference type="ChEBI" id="CHEBI:59505"/>
        <dbReference type="EC" id="5.3.2.5"/>
    </reaction>
</comment>
<comment type="cofactor">
    <cofactor evidence="1">
        <name>Mg(2+)</name>
        <dbReference type="ChEBI" id="CHEBI:18420"/>
    </cofactor>
    <text evidence="1">Binds 1 Mg(2+) ion per subunit.</text>
</comment>
<comment type="pathway">
    <text evidence="1">Amino-acid biosynthesis; L-methionine biosynthesis via salvage pathway; L-methionine from S-methyl-5-thio-alpha-D-ribose 1-phosphate: step 3/6.</text>
</comment>
<comment type="subunit">
    <text evidence="1">Homodimer.</text>
</comment>
<comment type="miscellaneous">
    <text evidence="1">Has no RuBP-carboxylation activity.</text>
</comment>
<comment type="similarity">
    <text evidence="1">Belongs to the RuBisCO large chain family. Type IV subfamily.</text>
</comment>
<comment type="sequence caution" evidence="2">
    <conflict type="erroneous initiation">
        <sequence resource="EMBL-CDS" id="AAU40416"/>
    </conflict>
</comment>
<organism>
    <name type="scientific">Bacillus licheniformis (strain ATCC 14580 / DSM 13 / JCM 2505 / CCUG 7422 / NBRC 12200 / NCIMB 9375 / NCTC 10341 / NRRL NRS-1264 / Gibson 46)</name>
    <dbReference type="NCBI Taxonomy" id="279010"/>
    <lineage>
        <taxon>Bacteria</taxon>
        <taxon>Bacillati</taxon>
        <taxon>Bacillota</taxon>
        <taxon>Bacilli</taxon>
        <taxon>Bacillales</taxon>
        <taxon>Bacillaceae</taxon>
        <taxon>Bacillus</taxon>
    </lineage>
</organism>
<dbReference type="EC" id="5.3.2.5" evidence="1"/>
<dbReference type="EMBL" id="AE017333">
    <property type="protein sequence ID" value="AAU40416.1"/>
    <property type="status" value="ALT_INIT"/>
    <property type="molecule type" value="Genomic_DNA"/>
</dbReference>
<dbReference type="EMBL" id="CP000002">
    <property type="protein sequence ID" value="AAU23062.1"/>
    <property type="molecule type" value="Genomic_DNA"/>
</dbReference>
<dbReference type="SMR" id="Q65KJ8"/>
<dbReference type="STRING" id="279010.BL03540"/>
<dbReference type="KEGG" id="bld:BLi01515"/>
<dbReference type="KEGG" id="bli:BL03540"/>
<dbReference type="eggNOG" id="COG1850">
    <property type="taxonomic scope" value="Bacteria"/>
</dbReference>
<dbReference type="HOGENOM" id="CLU_031450_3_1_9"/>
<dbReference type="UniPathway" id="UPA00904">
    <property type="reaction ID" value="UER00876"/>
</dbReference>
<dbReference type="Proteomes" id="UP000000606">
    <property type="component" value="Chromosome"/>
</dbReference>
<dbReference type="GO" id="GO:0043715">
    <property type="term" value="F:2,3-diketo-5-methylthiopentyl-1-phosphate enolase activity"/>
    <property type="evidence" value="ECO:0007669"/>
    <property type="project" value="UniProtKB-UniRule"/>
</dbReference>
<dbReference type="GO" id="GO:0000287">
    <property type="term" value="F:magnesium ion binding"/>
    <property type="evidence" value="ECO:0007669"/>
    <property type="project" value="UniProtKB-UniRule"/>
</dbReference>
<dbReference type="GO" id="GO:0016984">
    <property type="term" value="F:ribulose-bisphosphate carboxylase activity"/>
    <property type="evidence" value="ECO:0007669"/>
    <property type="project" value="InterPro"/>
</dbReference>
<dbReference type="GO" id="GO:0015977">
    <property type="term" value="P:carbon fixation"/>
    <property type="evidence" value="ECO:0007669"/>
    <property type="project" value="InterPro"/>
</dbReference>
<dbReference type="GO" id="GO:0019509">
    <property type="term" value="P:L-methionine salvage from methylthioadenosine"/>
    <property type="evidence" value="ECO:0007669"/>
    <property type="project" value="UniProtKB-UniRule"/>
</dbReference>
<dbReference type="CDD" id="cd08209">
    <property type="entry name" value="RLP_DK-MTP-1-P-enolase"/>
    <property type="match status" value="1"/>
</dbReference>
<dbReference type="Gene3D" id="3.20.20.110">
    <property type="entry name" value="Ribulose bisphosphate carboxylase, large subunit, C-terminal domain"/>
    <property type="match status" value="1"/>
</dbReference>
<dbReference type="Gene3D" id="3.30.70.150">
    <property type="entry name" value="RuBisCO large subunit, N-terminal domain"/>
    <property type="match status" value="1"/>
</dbReference>
<dbReference type="HAMAP" id="MF_01679">
    <property type="entry name" value="Salvage_MtnW"/>
    <property type="match status" value="1"/>
</dbReference>
<dbReference type="InterPro" id="IPR017717">
    <property type="entry name" value="Diketo-Methiopentyl-P_enolase"/>
</dbReference>
<dbReference type="InterPro" id="IPR033966">
    <property type="entry name" value="RuBisCO"/>
</dbReference>
<dbReference type="InterPro" id="IPR000685">
    <property type="entry name" value="RuBisCO_lsu_C"/>
</dbReference>
<dbReference type="InterPro" id="IPR036376">
    <property type="entry name" value="RuBisCO_lsu_C_sf"/>
</dbReference>
<dbReference type="InterPro" id="IPR017443">
    <property type="entry name" value="RuBisCO_lsu_fd_N"/>
</dbReference>
<dbReference type="InterPro" id="IPR036422">
    <property type="entry name" value="RuBisCO_lsu_N_sf"/>
</dbReference>
<dbReference type="NCBIfam" id="NF007095">
    <property type="entry name" value="PRK09549.1"/>
    <property type="match status" value="1"/>
</dbReference>
<dbReference type="NCBIfam" id="TIGR03332">
    <property type="entry name" value="salvage_mtnW"/>
    <property type="match status" value="1"/>
</dbReference>
<dbReference type="PANTHER" id="PTHR42704">
    <property type="entry name" value="RIBULOSE BISPHOSPHATE CARBOXYLASE"/>
    <property type="match status" value="1"/>
</dbReference>
<dbReference type="PANTHER" id="PTHR42704:SF17">
    <property type="entry name" value="RIBULOSE BISPHOSPHATE CARBOXYLASE LARGE CHAIN"/>
    <property type="match status" value="1"/>
</dbReference>
<dbReference type="Pfam" id="PF00016">
    <property type="entry name" value="RuBisCO_large"/>
    <property type="match status" value="2"/>
</dbReference>
<dbReference type="Pfam" id="PF02788">
    <property type="entry name" value="RuBisCO_large_N"/>
    <property type="match status" value="1"/>
</dbReference>
<dbReference type="SFLD" id="SFLDF00157">
    <property type="entry name" value="2_3-diketo-5-methylthiopentyl"/>
    <property type="match status" value="1"/>
</dbReference>
<dbReference type="SFLD" id="SFLDS00014">
    <property type="entry name" value="RuBisCO"/>
    <property type="match status" value="1"/>
</dbReference>
<dbReference type="SUPFAM" id="SSF51649">
    <property type="entry name" value="RuBisCo, C-terminal domain"/>
    <property type="match status" value="1"/>
</dbReference>
<dbReference type="SUPFAM" id="SSF54966">
    <property type="entry name" value="RuBisCO, large subunit, small (N-terminal) domain"/>
    <property type="match status" value="1"/>
</dbReference>
<name>MTNW_BACLD</name>
<proteinExistence type="inferred from homology"/>
<reference key="1">
    <citation type="journal article" date="2004" name="J. Mol. Microbiol. Biotechnol.">
        <title>The complete genome sequence of Bacillus licheniformis DSM13, an organism with great industrial potential.</title>
        <authorList>
            <person name="Veith B."/>
            <person name="Herzberg C."/>
            <person name="Steckel S."/>
            <person name="Feesche J."/>
            <person name="Maurer K.H."/>
            <person name="Ehrenreich P."/>
            <person name="Baeumer S."/>
            <person name="Henne A."/>
            <person name="Liesegang H."/>
            <person name="Merkl R."/>
            <person name="Ehrenreich A."/>
            <person name="Gottschalk G."/>
        </authorList>
    </citation>
    <scope>NUCLEOTIDE SEQUENCE [LARGE SCALE GENOMIC DNA]</scope>
    <source>
        <strain>ATCC 14580 / DSM 13 / JCM 2505 / CCUG 7422 / NBRC 12200 / NCIMB 9375 / NCTC 10341 / NRRL NRS-1264 / Gibson 46</strain>
    </source>
</reference>
<reference key="2">
    <citation type="journal article" date="2004" name="Genome Biol.">
        <title>Complete genome sequence of the industrial bacterium Bacillus licheniformis and comparisons with closely related Bacillus species.</title>
        <authorList>
            <person name="Rey M.W."/>
            <person name="Ramaiya P."/>
            <person name="Nelson B.A."/>
            <person name="Brody-Karpin S.D."/>
            <person name="Zaretsky E.J."/>
            <person name="Tang M."/>
            <person name="Lopez de Leon A."/>
            <person name="Xiang H."/>
            <person name="Gusti V."/>
            <person name="Clausen I.G."/>
            <person name="Olsen P.B."/>
            <person name="Rasmussen M.D."/>
            <person name="Andersen J.T."/>
            <person name="Joergensen P.L."/>
            <person name="Larsen T.S."/>
            <person name="Sorokin A."/>
            <person name="Bolotin A."/>
            <person name="Lapidus A."/>
            <person name="Galleron N."/>
            <person name="Ehrlich S.D."/>
            <person name="Berka R.M."/>
        </authorList>
    </citation>
    <scope>NUCLEOTIDE SEQUENCE [LARGE SCALE GENOMIC DNA]</scope>
    <source>
        <strain>ATCC 14580 / DSM 13 / JCM 2505 / CCUG 7422 / NBRC 12200 / NCIMB 9375 / NCTC 10341 / NRRL NRS-1264 / Gibson 46</strain>
    </source>
</reference>